<sequence length="517" mass="58460">MLSEDLATSFLPPSYMWSLTLFALCLSAILMFPFLTGRRLSITHRKQGWRISLVNTRGDFQNEAEQLIRMGFSKSPSAFRMSTDGGPRLILSQKHLDAMSDDDHFNVAEAVKRDYLLDLFGFETAFHGTLHSEIVAPAVTAMTKKLVPLVPLMSKEAALGLEKEWTDNSEYHDVPLQPTLGGVVARLASLAFVGPDLCRNPTWLEITVSYTINRVIAVYVLRIFPSFLQPFVHWVLPPCRKLRAQIQQARELILPALKHERQLQSAGNAKRDPNRPFSSLAWNDEYAAGRLYDPTVAQLRMIFVSIHTTIDMAVKVLVRLCEHPELIQPLREEIVTVCGENGLTHSSLERLLLMDSLMKETQRLEPASLATIARYTHRKTTLSDGTIVPKGTQVVLPNMFMWNNESIYPDSNTFDAYRFLRMRDDPETAKLASFTRSSHIHTAFGHGKHTCPGRFFASDTIKIILCHILLKYDLQLCDGEAPAKKRYGFAMYRDPDARIRVRRRGVEGVSEGILAGF</sequence>
<protein>
    <recommendedName>
        <fullName evidence="7">Cytochrome P450 monooxygenase cdmJ</fullName>
        <ecNumber evidence="6">1.-.-.-</ecNumber>
    </recommendedName>
    <alternativeName>
        <fullName evidence="7">chrodrimanin B biosynthesis cluster protein J</fullName>
    </alternativeName>
</protein>
<reference key="1">
    <citation type="journal article" date="2018" name="Org. Lett.">
        <title>Elucidation and heterologous reconstitution of chrodrimanin B biosynthesis.</title>
        <authorList>
            <person name="Bai T."/>
            <person name="Quan Z."/>
            <person name="Zhai R."/>
            <person name="Awakawa T."/>
            <person name="Matsuda Y."/>
            <person name="Abe I."/>
        </authorList>
    </citation>
    <scope>NUCLEOTIDE SEQUENCE [GENOMIC DNA]</scope>
    <scope>FUNCTION</scope>
    <scope>CATALYTIC ACTIVITY</scope>
    <scope>PATHWAY</scope>
    <source>
        <strain>TPU1311</strain>
    </source>
</reference>
<reference key="2">
    <citation type="journal article" date="2015" name="Bioorg. Med. Chem. Lett.">
        <title>Verruculides A and B, two new protein tyrosine phosphatase 1B inhibitors from an Indonesian ascidian-derived Penicillium verruculosum.</title>
        <authorList>
            <person name="Yamazaki H."/>
            <person name="Nakayama W."/>
            <person name="Takahashi O."/>
            <person name="Kirikoshi R."/>
            <person name="Izumikawa Y."/>
            <person name="Iwasaki K."/>
            <person name="Toraiwa K."/>
            <person name="Ukai K."/>
            <person name="Rotinsulu H."/>
            <person name="Wewengkang D.S."/>
            <person name="Sumilat D.A."/>
            <person name="Mangindaan R.E."/>
            <person name="Namikoshi M."/>
        </authorList>
    </citation>
    <scope>BIOTECHNOLOGY</scope>
</reference>
<reference key="3">
    <citation type="journal article" date="2015" name="PLoS ONE">
        <title>Meroterpenoid Chrodrimanins Are Selective and Potent Blockers of Insect GABA-Gated Chloride Channels.</title>
        <authorList>
            <person name="Xu Y."/>
            <person name="Furutani S."/>
            <person name="Ihara M."/>
            <person name="Ling Y."/>
            <person name="Yang X."/>
            <person name="Kai K."/>
            <person name="Hayashi H."/>
            <person name="Matsuda K."/>
        </authorList>
    </citation>
    <scope>BIOTECHNOLOGY</scope>
</reference>
<organism>
    <name type="scientific">Talaromyces verruculosus</name>
    <name type="common">Penicillium verruculosum</name>
    <dbReference type="NCBI Taxonomy" id="198730"/>
    <lineage>
        <taxon>Eukaryota</taxon>
        <taxon>Fungi</taxon>
        <taxon>Dikarya</taxon>
        <taxon>Ascomycota</taxon>
        <taxon>Pezizomycotina</taxon>
        <taxon>Eurotiomycetes</taxon>
        <taxon>Eurotiomycetidae</taxon>
        <taxon>Eurotiales</taxon>
        <taxon>Trichocomaceae</taxon>
        <taxon>Talaromyces</taxon>
        <taxon>Talaromyces sect. Talaromyces</taxon>
    </lineage>
</organism>
<feature type="chain" id="PRO_0000449135" description="Cytochrome P450 monooxygenase cdmJ">
    <location>
        <begin position="1"/>
        <end position="517"/>
    </location>
</feature>
<feature type="transmembrane region" description="Helical" evidence="2">
    <location>
        <begin position="15"/>
        <end position="35"/>
    </location>
</feature>
<feature type="binding site" description="axial binding residue" evidence="1">
    <location>
        <position position="451"/>
    </location>
    <ligand>
        <name>heme</name>
        <dbReference type="ChEBI" id="CHEBI:30413"/>
    </ligand>
    <ligandPart>
        <name>Fe</name>
        <dbReference type="ChEBI" id="CHEBI:18248"/>
    </ligandPart>
</feature>
<feature type="glycosylation site" description="N-linked (GlcNAc...) asparagine" evidence="3">
    <location>
        <position position="404"/>
    </location>
</feature>
<dbReference type="EC" id="1.-.-.-" evidence="6"/>
<dbReference type="EMBL" id="LC422696">
    <property type="protein sequence ID" value="BBG28489.1"/>
    <property type="molecule type" value="Genomic_DNA"/>
</dbReference>
<dbReference type="SMR" id="A0A3G9GNK2"/>
<dbReference type="GlyCosmos" id="A0A3G9GNK2">
    <property type="glycosylation" value="1 site, No reported glycans"/>
</dbReference>
<dbReference type="UniPathway" id="UPA00213"/>
<dbReference type="GO" id="GO:0016020">
    <property type="term" value="C:membrane"/>
    <property type="evidence" value="ECO:0007669"/>
    <property type="project" value="UniProtKB-SubCell"/>
</dbReference>
<dbReference type="GO" id="GO:0020037">
    <property type="term" value="F:heme binding"/>
    <property type="evidence" value="ECO:0007669"/>
    <property type="project" value="InterPro"/>
</dbReference>
<dbReference type="GO" id="GO:0005506">
    <property type="term" value="F:iron ion binding"/>
    <property type="evidence" value="ECO:0007669"/>
    <property type="project" value="InterPro"/>
</dbReference>
<dbReference type="GO" id="GO:0004497">
    <property type="term" value="F:monooxygenase activity"/>
    <property type="evidence" value="ECO:0007669"/>
    <property type="project" value="UniProtKB-KW"/>
</dbReference>
<dbReference type="GO" id="GO:0016705">
    <property type="term" value="F:oxidoreductase activity, acting on paired donors, with incorporation or reduction of molecular oxygen"/>
    <property type="evidence" value="ECO:0007669"/>
    <property type="project" value="InterPro"/>
</dbReference>
<dbReference type="GO" id="GO:0019748">
    <property type="term" value="P:secondary metabolic process"/>
    <property type="evidence" value="ECO:0007669"/>
    <property type="project" value="UniProtKB-ARBA"/>
</dbReference>
<dbReference type="GO" id="GO:0016114">
    <property type="term" value="P:terpenoid biosynthetic process"/>
    <property type="evidence" value="ECO:0007669"/>
    <property type="project" value="UniProtKB-UniPathway"/>
</dbReference>
<dbReference type="CDD" id="cd11041">
    <property type="entry name" value="CYP503A1-like"/>
    <property type="match status" value="1"/>
</dbReference>
<dbReference type="Gene3D" id="1.10.630.10">
    <property type="entry name" value="Cytochrome P450"/>
    <property type="match status" value="1"/>
</dbReference>
<dbReference type="InterPro" id="IPR001128">
    <property type="entry name" value="Cyt_P450"/>
</dbReference>
<dbReference type="InterPro" id="IPR017972">
    <property type="entry name" value="Cyt_P450_CS"/>
</dbReference>
<dbReference type="InterPro" id="IPR002403">
    <property type="entry name" value="Cyt_P450_E_grp-IV"/>
</dbReference>
<dbReference type="InterPro" id="IPR036396">
    <property type="entry name" value="Cyt_P450_sf"/>
</dbReference>
<dbReference type="PANTHER" id="PTHR46206">
    <property type="entry name" value="CYTOCHROME P450"/>
    <property type="match status" value="1"/>
</dbReference>
<dbReference type="PANTHER" id="PTHR46206:SF3">
    <property type="entry name" value="P450, PUTATIVE (EUROFUNG)-RELATED"/>
    <property type="match status" value="1"/>
</dbReference>
<dbReference type="Pfam" id="PF00067">
    <property type="entry name" value="p450"/>
    <property type="match status" value="1"/>
</dbReference>
<dbReference type="PRINTS" id="PR00465">
    <property type="entry name" value="EP450IV"/>
</dbReference>
<dbReference type="SUPFAM" id="SSF48264">
    <property type="entry name" value="Cytochrome P450"/>
    <property type="match status" value="1"/>
</dbReference>
<dbReference type="PROSITE" id="PS00086">
    <property type="entry name" value="CYTOCHROME_P450"/>
    <property type="match status" value="1"/>
</dbReference>
<proteinExistence type="evidence at protein level"/>
<keyword id="KW-0325">Glycoprotein</keyword>
<keyword id="KW-0349">Heme</keyword>
<keyword id="KW-0408">Iron</keyword>
<keyword id="KW-0472">Membrane</keyword>
<keyword id="KW-0479">Metal-binding</keyword>
<keyword id="KW-0503">Monooxygenase</keyword>
<keyword id="KW-0560">Oxidoreductase</keyword>
<keyword id="KW-0812">Transmembrane</keyword>
<keyword id="KW-1133">Transmembrane helix</keyword>
<name>CDMJ_TALVE</name>
<comment type="function">
    <text evidence="6 9">Cytochrome P450 monooxygenase; part of the gene cluster that mediates the biosynthesis of chrodrimanin B, a meroterpenoid that acts as a potent blocker of insect GABA-gated chloride channels (PubMed:30417647). The first step of the pathway is the biosynthesis of 6-hydroxymellein by the polyketide synthase cdmE (PubMed:30417647). The prenyltransferase cdmH acts as a 6-hydroxymellein 5-farnesyltransferase and produces the hydrophobic metabolite verruculide C (PubMed:30417647). The FAD-dependent monooxygenase cdmI further converts verruculide C into verruculide B (PubMed:30417647). The terpene cyclase cdmG then produced the pentacyclic molecule 3-hydroxypentacecilide A, the backbone structure of chrodrimanin B, via folding the farnesyl moiety of the substrate into the chair-boat conformation (PubMed:30417647). The short-chain dehydrogenase/reductase cdmF functions as the 3-OH dehydrogenase that oxidizes the C-3 hydroxyl group of 3-hydroxypentacecilide A and produces chrodrimanin C, the dehydrogenated product of 3-hydroxypentacecilide A (PubMed:30417647). The cytochrome P450 monooxygenase cdmJ then accepts both 3-hydroxypentacecilide A and chrodrimanin C and functions as a C-7-beta-hydroxylase to produce respectively chrodrimanin H and chrodrimanin F (PubMed:30417647). The dioxygenase cdmA accepts chrodrimanin H to afford chrodrimanin E, which is further transformed to chrodrimanin A by the dioxygenase cdmD (PubMed:30417647). CdmA can also accept chrodrimanin C as substrate to convert it into verruculide A, which is further converted into chrodrimanin T by cdmD (PubMed:30417647). The last step of the biosynthesis is proposed to be performed by the acetyltransferase cdmC which acetylates chrodrimanin A to yield chrodrimanin B (Probable). The pathway may also lead to the production of additional shunt products, including chrodrimanins T and U (PubMed:30417647).</text>
</comment>
<comment type="catalytic activity">
    <reaction evidence="6">
        <text>3-hydroxypentacecilide A + NADPH + O2 + H(+) = chrodrimanin F + NADP(+) + H2O</text>
        <dbReference type="Rhea" id="RHEA:65268"/>
        <dbReference type="ChEBI" id="CHEBI:15377"/>
        <dbReference type="ChEBI" id="CHEBI:15378"/>
        <dbReference type="ChEBI" id="CHEBI:15379"/>
        <dbReference type="ChEBI" id="CHEBI:57783"/>
        <dbReference type="ChEBI" id="CHEBI:58349"/>
        <dbReference type="ChEBI" id="CHEBI:156411"/>
        <dbReference type="ChEBI" id="CHEBI:156415"/>
    </reaction>
    <physiologicalReaction direction="left-to-right" evidence="6">
        <dbReference type="Rhea" id="RHEA:65269"/>
    </physiologicalReaction>
</comment>
<comment type="catalytic activity">
    <reaction evidence="6">
        <text>chrodrimanin C + NADPH + O2 + H(+) = chrodrimanin H + NADP(+) + H2O</text>
        <dbReference type="Rhea" id="RHEA:65272"/>
        <dbReference type="ChEBI" id="CHEBI:15377"/>
        <dbReference type="ChEBI" id="CHEBI:15378"/>
        <dbReference type="ChEBI" id="CHEBI:15379"/>
        <dbReference type="ChEBI" id="CHEBI:57783"/>
        <dbReference type="ChEBI" id="CHEBI:58349"/>
        <dbReference type="ChEBI" id="CHEBI:156412"/>
        <dbReference type="ChEBI" id="CHEBI:156416"/>
    </reaction>
    <physiologicalReaction direction="left-to-right" evidence="6">
        <dbReference type="Rhea" id="RHEA:65273"/>
    </physiologicalReaction>
</comment>
<comment type="catalytic activity">
    <reaction evidence="6">
        <text>verruculide A + NADPH + O2 + H(+) = chrodrimanin E + NADP(+) + H2O</text>
        <dbReference type="Rhea" id="RHEA:65332"/>
        <dbReference type="ChEBI" id="CHEBI:15377"/>
        <dbReference type="ChEBI" id="CHEBI:15378"/>
        <dbReference type="ChEBI" id="CHEBI:15379"/>
        <dbReference type="ChEBI" id="CHEBI:57783"/>
        <dbReference type="ChEBI" id="CHEBI:58349"/>
        <dbReference type="ChEBI" id="CHEBI:156413"/>
        <dbReference type="ChEBI" id="CHEBI:156417"/>
    </reaction>
    <physiologicalReaction direction="left-to-right" evidence="6">
        <dbReference type="Rhea" id="RHEA:65333"/>
    </physiologicalReaction>
</comment>
<comment type="catalytic activity">
    <reaction evidence="6">
        <text>chrodrimanin T + NADPH + O2 + H(+) = chrodrimanin A + NADP(+) + H2O</text>
        <dbReference type="Rhea" id="RHEA:65336"/>
        <dbReference type="ChEBI" id="CHEBI:15377"/>
        <dbReference type="ChEBI" id="CHEBI:15378"/>
        <dbReference type="ChEBI" id="CHEBI:15379"/>
        <dbReference type="ChEBI" id="CHEBI:57783"/>
        <dbReference type="ChEBI" id="CHEBI:58349"/>
        <dbReference type="ChEBI" id="CHEBI:156414"/>
        <dbReference type="ChEBI" id="CHEBI:156418"/>
    </reaction>
    <physiologicalReaction direction="left-to-right" evidence="6">
        <dbReference type="Rhea" id="RHEA:65337"/>
    </physiologicalReaction>
</comment>
<comment type="cofactor">
    <cofactor evidence="1">
        <name>heme</name>
        <dbReference type="ChEBI" id="CHEBI:30413"/>
    </cofactor>
</comment>
<comment type="pathway">
    <text evidence="6">Secondary metabolite biosynthesis; terpenoid biosynthesis.</text>
</comment>
<comment type="subcellular location">
    <subcellularLocation>
        <location evidence="2">Membrane</location>
        <topology evidence="2">Single-pass membrane protein</topology>
    </subcellularLocation>
</comment>
<comment type="biotechnology">
    <text evidence="4 5">Compounds in the chrodrimanin family such as chrodrimanin A or verruculide A exhibit strong inhibitory activities against protein tyrosine phosphatase 1B (PTP1B) and therefore, they could potentially be developed into drugs for the treatment of type 2 diabetes or obesity (PubMed:26115570). Furthermore, chrodrimanin B, the end product of the pathway involving chrodrimanin A or verruculide A, does not exhibit the PTP1B inhibitory activity, while it functions as a potent blocker of insect GABA-gated chloride channels (PubMed:25902139).</text>
</comment>
<comment type="similarity">
    <text evidence="8">Belongs to the cytochrome P450 family.</text>
</comment>
<evidence type="ECO:0000250" key="1">
    <source>
        <dbReference type="UniProtKB" id="P04798"/>
    </source>
</evidence>
<evidence type="ECO:0000255" key="2"/>
<evidence type="ECO:0000255" key="3">
    <source>
        <dbReference type="PROSITE-ProRule" id="PRU00498"/>
    </source>
</evidence>
<evidence type="ECO:0000269" key="4">
    <source>
    </source>
</evidence>
<evidence type="ECO:0000269" key="5">
    <source>
    </source>
</evidence>
<evidence type="ECO:0000269" key="6">
    <source>
    </source>
</evidence>
<evidence type="ECO:0000303" key="7">
    <source>
    </source>
</evidence>
<evidence type="ECO:0000305" key="8"/>
<evidence type="ECO:0000305" key="9">
    <source>
    </source>
</evidence>
<gene>
    <name evidence="7" type="primary">cdmJ</name>
</gene>
<accession>A0A3G9GNK2</accession>